<feature type="chain" id="PRO_0000080774" description="Sodium-dependent phosphate transporter 1">
    <location>
        <begin position="1"/>
        <end position="681"/>
    </location>
</feature>
<feature type="transmembrane region" description="Helical" evidence="2">
    <location>
        <begin position="25"/>
        <end position="45"/>
    </location>
</feature>
<feature type="transmembrane region" description="Helical" evidence="2">
    <location>
        <begin position="66"/>
        <end position="86"/>
    </location>
</feature>
<feature type="transmembrane region" description="Helical" evidence="2">
    <location>
        <begin position="106"/>
        <end position="126"/>
    </location>
</feature>
<feature type="transmembrane region" description="Helical" evidence="2">
    <location>
        <begin position="162"/>
        <end position="182"/>
    </location>
</feature>
<feature type="transmembrane region" description="Helical" evidence="2">
    <location>
        <begin position="201"/>
        <end position="221"/>
    </location>
</feature>
<feature type="transmembrane region" description="Helical" evidence="2">
    <location>
        <begin position="234"/>
        <end position="254"/>
    </location>
</feature>
<feature type="transmembrane region" description="Helical" evidence="2">
    <location>
        <begin position="513"/>
        <end position="533"/>
    </location>
</feature>
<feature type="transmembrane region" description="Helical" evidence="2">
    <location>
        <begin position="561"/>
        <end position="581"/>
    </location>
</feature>
<feature type="transmembrane region" description="Helical" evidence="2">
    <location>
        <begin position="602"/>
        <end position="622"/>
    </location>
</feature>
<feature type="transmembrane region" description="Helical" evidence="2">
    <location>
        <begin position="652"/>
        <end position="672"/>
    </location>
</feature>
<feature type="region of interest" description="Disordered" evidence="3">
    <location>
        <begin position="266"/>
        <end position="295"/>
    </location>
</feature>
<feature type="compositionally biased region" description="Basic and acidic residues" evidence="3">
    <location>
        <begin position="275"/>
        <end position="289"/>
    </location>
</feature>
<feature type="modified residue" description="Phosphoserine" evidence="1">
    <location>
        <position position="269"/>
    </location>
</feature>
<feature type="modified residue" description="Phosphoserine" evidence="6">
    <location>
        <position position="273"/>
    </location>
</feature>
<name>S20A1_RAT</name>
<keyword id="KW-1003">Cell membrane</keyword>
<keyword id="KW-0472">Membrane</keyword>
<keyword id="KW-0592">Phosphate transport</keyword>
<keyword id="KW-0597">Phosphoprotein</keyword>
<keyword id="KW-0675">Receptor</keyword>
<keyword id="KW-1185">Reference proteome</keyword>
<keyword id="KW-0769">Symport</keyword>
<keyword id="KW-0812">Transmembrane</keyword>
<keyword id="KW-1133">Transmembrane helix</keyword>
<keyword id="KW-0813">Transport</keyword>
<comment type="function">
    <text evidence="1 4">Sodium-phosphate symporter which preferentially transports the monovalent form of phosphate with a stoichiometry of two sodium ions per phosphate ion (PubMed:9528951). May play a role in extracellular matrix and cartilage calcification as well as in vascular calcification (By similarity). Essential for cell proliferation but this function is independent of its phosphate transporter activity (By similarity).</text>
</comment>
<comment type="catalytic activity">
    <reaction evidence="4">
        <text>2 Na(+)(out) + phosphate(out) = 2 Na(+)(in) + phosphate(in)</text>
        <dbReference type="Rhea" id="RHEA:71259"/>
        <dbReference type="ChEBI" id="CHEBI:29101"/>
        <dbReference type="ChEBI" id="CHEBI:43474"/>
    </reaction>
</comment>
<comment type="subcellular location">
    <subcellularLocation>
        <location evidence="1">Cell membrane</location>
        <topology evidence="2">Multi-pass membrane protein</topology>
    </subcellularLocation>
</comment>
<comment type="tissue specificity">
    <text evidence="4">Ubiquitously expressed.</text>
</comment>
<comment type="induction">
    <text evidence="4">By 1,25-dihydroxyvitamin D3 and phosphate deprivation.</text>
</comment>
<comment type="similarity">
    <text evidence="5">Belongs to the inorganic phosphate transporter (PiT) (TC 2.A.20) family.</text>
</comment>
<protein>
    <recommendedName>
        <fullName>Sodium-dependent phosphate transporter 1</fullName>
    </recommendedName>
    <alternativeName>
        <fullName>Phosphate transporter 1</fullName>
        <shortName>PiT-1</shortName>
    </alternativeName>
    <alternativeName>
        <fullName>RPHO-1</fullName>
    </alternativeName>
    <alternativeName>
        <fullName>Solute carrier family 20 member 1</fullName>
    </alternativeName>
</protein>
<dbReference type="EMBL" id="AB000489">
    <property type="protein sequence ID" value="BAB07789.1"/>
    <property type="molecule type" value="mRNA"/>
</dbReference>
<dbReference type="RefSeq" id="NP_112410.1">
    <property type="nucleotide sequence ID" value="NM_031148.3"/>
</dbReference>
<dbReference type="RefSeq" id="XP_006235053.1">
    <property type="nucleotide sequence ID" value="XM_006234991.3"/>
</dbReference>
<dbReference type="SMR" id="Q9JJP0"/>
<dbReference type="BioGRID" id="249684">
    <property type="interactions" value="1"/>
</dbReference>
<dbReference type="FunCoup" id="Q9JJP0">
    <property type="interactions" value="2318"/>
</dbReference>
<dbReference type="STRING" id="10116.ENSRNOP00000025294"/>
<dbReference type="GlyGen" id="Q9JJP0">
    <property type="glycosylation" value="1 site"/>
</dbReference>
<dbReference type="iPTMnet" id="Q9JJP0"/>
<dbReference type="PhosphoSitePlus" id="Q9JJP0"/>
<dbReference type="PaxDb" id="10116-ENSRNOP00000025294"/>
<dbReference type="Ensembl" id="ENSRNOT00000025294.7">
    <property type="protein sequence ID" value="ENSRNOP00000025294.4"/>
    <property type="gene ID" value="ENSRNOG00000018567.8"/>
</dbReference>
<dbReference type="GeneID" id="81826"/>
<dbReference type="KEGG" id="rno:81826"/>
<dbReference type="UCSC" id="RGD:621079">
    <property type="organism name" value="rat"/>
</dbReference>
<dbReference type="AGR" id="RGD:621079"/>
<dbReference type="CTD" id="6574"/>
<dbReference type="RGD" id="621079">
    <property type="gene designation" value="Slc20a1"/>
</dbReference>
<dbReference type="eggNOG" id="KOG2493">
    <property type="taxonomic scope" value="Eukaryota"/>
</dbReference>
<dbReference type="GeneTree" id="ENSGT00390000014879"/>
<dbReference type="HOGENOM" id="CLU_015355_3_1_1"/>
<dbReference type="InParanoid" id="Q9JJP0"/>
<dbReference type="OMA" id="AWKTGNA"/>
<dbReference type="OrthoDB" id="260807at2759"/>
<dbReference type="PhylomeDB" id="Q9JJP0"/>
<dbReference type="TreeFam" id="TF314426"/>
<dbReference type="Reactome" id="R-RNO-427652">
    <property type="pathway name" value="Sodium-coupled phosphate cotransporters"/>
</dbReference>
<dbReference type="PRO" id="PR:Q9JJP0"/>
<dbReference type="Proteomes" id="UP000002494">
    <property type="component" value="Chromosome 3"/>
</dbReference>
<dbReference type="Bgee" id="ENSRNOG00000018567">
    <property type="expression patterns" value="Expressed in cerebellum and 20 other cell types or tissues"/>
</dbReference>
<dbReference type="GO" id="GO:0005886">
    <property type="term" value="C:plasma membrane"/>
    <property type="evidence" value="ECO:0000250"/>
    <property type="project" value="UniProtKB"/>
</dbReference>
<dbReference type="GO" id="GO:0005316">
    <property type="term" value="F:high-affinity phosphate:sodium symporter activity"/>
    <property type="evidence" value="ECO:0000314"/>
    <property type="project" value="RGD"/>
</dbReference>
<dbReference type="GO" id="GO:0005315">
    <property type="term" value="F:phosphate transmembrane transporter activity"/>
    <property type="evidence" value="ECO:0000318"/>
    <property type="project" value="GO_Central"/>
</dbReference>
<dbReference type="GO" id="GO:0005436">
    <property type="term" value="F:sodium:phosphate symporter activity"/>
    <property type="evidence" value="ECO:0000266"/>
    <property type="project" value="RGD"/>
</dbReference>
<dbReference type="GO" id="GO:0031214">
    <property type="term" value="P:biomineral tissue development"/>
    <property type="evidence" value="ECO:0000266"/>
    <property type="project" value="RGD"/>
</dbReference>
<dbReference type="GO" id="GO:0008283">
    <property type="term" value="P:cell population proliferation"/>
    <property type="evidence" value="ECO:0000250"/>
    <property type="project" value="UniProtKB"/>
</dbReference>
<dbReference type="GO" id="GO:0035435">
    <property type="term" value="P:phosphate ion transmembrane transport"/>
    <property type="evidence" value="ECO:0000318"/>
    <property type="project" value="GO_Central"/>
</dbReference>
<dbReference type="GO" id="GO:0006817">
    <property type="term" value="P:phosphate ion transport"/>
    <property type="evidence" value="ECO:0000314"/>
    <property type="project" value="RGD"/>
</dbReference>
<dbReference type="GO" id="GO:0006814">
    <property type="term" value="P:sodium ion transport"/>
    <property type="evidence" value="ECO:0000314"/>
    <property type="project" value="RGD"/>
</dbReference>
<dbReference type="InterPro" id="IPR001204">
    <property type="entry name" value="Phos_transporter"/>
</dbReference>
<dbReference type="PANTHER" id="PTHR11101">
    <property type="entry name" value="PHOSPHATE TRANSPORTER"/>
    <property type="match status" value="1"/>
</dbReference>
<dbReference type="PANTHER" id="PTHR11101:SF46">
    <property type="entry name" value="SODIUM-DEPENDENT PHOSPHATE TRANSPORTER 1"/>
    <property type="match status" value="1"/>
</dbReference>
<dbReference type="Pfam" id="PF01384">
    <property type="entry name" value="PHO4"/>
    <property type="match status" value="1"/>
</dbReference>
<evidence type="ECO:0000250" key="1">
    <source>
        <dbReference type="UniProtKB" id="Q8WUM9"/>
    </source>
</evidence>
<evidence type="ECO:0000255" key="2"/>
<evidence type="ECO:0000256" key="3">
    <source>
        <dbReference type="SAM" id="MobiDB-lite"/>
    </source>
</evidence>
<evidence type="ECO:0000269" key="4">
    <source>
    </source>
</evidence>
<evidence type="ECO:0000305" key="5"/>
<evidence type="ECO:0007744" key="6">
    <source>
    </source>
</evidence>
<organism>
    <name type="scientific">Rattus norvegicus</name>
    <name type="common">Rat</name>
    <dbReference type="NCBI Taxonomy" id="10116"/>
    <lineage>
        <taxon>Eukaryota</taxon>
        <taxon>Metazoa</taxon>
        <taxon>Chordata</taxon>
        <taxon>Craniata</taxon>
        <taxon>Vertebrata</taxon>
        <taxon>Euteleostomi</taxon>
        <taxon>Mammalia</taxon>
        <taxon>Eutheria</taxon>
        <taxon>Euarchontoglires</taxon>
        <taxon>Glires</taxon>
        <taxon>Rodentia</taxon>
        <taxon>Myomorpha</taxon>
        <taxon>Muroidea</taxon>
        <taxon>Muridae</taxon>
        <taxon>Murinae</taxon>
        <taxon>Rattus</taxon>
    </lineage>
</organism>
<gene>
    <name type="primary">Slc20a1</name>
    <name type="synonym">Pit1</name>
</gene>
<sequence length="681" mass="74187">MASTLAPITSTLAAVTASAPPKYDNLWMLILGFIIAFVLAFSVGANDVANSFGTAVGSGVVTLKQACILASIFETVGSALLGAKVSETIRKGLIDVEKYNATQDLLMAGSVSAMFGSAVWQLVASFLKLPISGTHCIVGATIGFSLVAKGQEGIKWSELIKIVMSWFVSPLLSGIMSGILFFLVRAFILRKADPVPNGLRALPIFYACTIGINLFSIMYTGAPLLGFDKLPLWGTILISVGCAVFCALIVWFFVCPRMKRKIEREVKSSPSESPLMEKKNNLKDHEETKMAPGDVENRNPVSEVVCATGPLRAVVEERTVSFKLGDLEEAPERERLPMDLKEETNIDGTINGAVQLPNGNLVQFSQTVSNQINSSGHYQYHTVHKDSGLYKELLHKLHLAKVGDCMGDSGDKPLRRNNSYTSYTMAICGMPLDSFRAKEGEQKGDEMETLTWPNADTKKRIRMDSYTSYCNAVSDLHSESEMDMSVKAEMGLGDRKGSSGSLEEWYDQDKPEVSLLFQFLQILTACFGSFAHGGNDVSNAIGPLVALYLVYETRDVTTKEATPIWLLLYGGVGICMGLWVWGRRVIQTMGKDLTPITPSSGFSIELASAFTVVVASNIGLPISTTHCKVGSVVSVGWLRSKKAVDWRLFRNIFMAWFVTVPISGVISAAIMAVFKHIILPV</sequence>
<reference key="1">
    <citation type="journal article" date="1998" name="Endocrinology">
        <title>Molecular cloning and hormonal regulation of PiT-1, a sodium-dependent phosphate cotransporter from rat parathyroid glands.</title>
        <authorList>
            <person name="Tatsumi S."/>
            <person name="Segawa H."/>
            <person name="Morita K."/>
            <person name="Haga H."/>
            <person name="Kouda T."/>
            <person name="Yamamoto H."/>
            <person name="Inoue Y."/>
            <person name="Nii T."/>
            <person name="Katai K."/>
            <person name="Taketani Y."/>
            <person name="Miyamoto K."/>
            <person name="Takeda E."/>
        </authorList>
    </citation>
    <scope>NUCLEOTIDE SEQUENCE [MRNA]</scope>
    <scope>FUNCTION</scope>
    <scope>INDUCTION</scope>
    <scope>TISSUE SPECIFICITY</scope>
    <scope>TRANSPORTER ACTIVITY</scope>
    <source>
        <tissue>Parathyroid</tissue>
    </source>
</reference>
<reference key="2">
    <citation type="journal article" date="2012" name="Nat. Commun.">
        <title>Quantitative maps of protein phosphorylation sites across 14 different rat organs and tissues.</title>
        <authorList>
            <person name="Lundby A."/>
            <person name="Secher A."/>
            <person name="Lage K."/>
            <person name="Nordsborg N.B."/>
            <person name="Dmytriyev A."/>
            <person name="Lundby C."/>
            <person name="Olsen J.V."/>
        </authorList>
    </citation>
    <scope>PHOSPHORYLATION [LARGE SCALE ANALYSIS] AT SER-273</scope>
    <scope>IDENTIFICATION BY MASS SPECTROMETRY [LARGE SCALE ANALYSIS]</scope>
</reference>
<accession>Q9JJP0</accession>
<proteinExistence type="evidence at protein level"/>